<evidence type="ECO:0000269" key="1">
    <source>
    </source>
</evidence>
<evidence type="ECO:0000305" key="2"/>
<dbReference type="EC" id="4.1.1.5"/>
<dbReference type="EMBL" id="AY072795">
    <property type="protein sequence ID" value="AAL68399.1"/>
    <property type="molecule type" value="Genomic_DNA"/>
</dbReference>
<dbReference type="SMR" id="Q8L208"/>
<dbReference type="eggNOG" id="COG3527">
    <property type="taxonomic scope" value="Bacteria"/>
</dbReference>
<dbReference type="OMA" id="YKPMLEA"/>
<dbReference type="OrthoDB" id="8612680at2"/>
<dbReference type="BRENDA" id="4.1.1.5">
    <property type="organism ID" value="5956"/>
</dbReference>
<dbReference type="UniPathway" id="UPA00626">
    <property type="reaction ID" value="UER00678"/>
</dbReference>
<dbReference type="GO" id="GO:0047605">
    <property type="term" value="F:acetolactate decarboxylase activity"/>
    <property type="evidence" value="ECO:0007669"/>
    <property type="project" value="UniProtKB-EC"/>
</dbReference>
<dbReference type="GO" id="GO:0045151">
    <property type="term" value="P:acetoin biosynthetic process"/>
    <property type="evidence" value="ECO:0007669"/>
    <property type="project" value="UniProtKB-KW"/>
</dbReference>
<dbReference type="CDD" id="cd17299">
    <property type="entry name" value="acetolactate_decarboxylase"/>
    <property type="match status" value="1"/>
</dbReference>
<dbReference type="Gene3D" id="3.30.1330.80">
    <property type="entry name" value="Hypothetical protein, similar to alpha- acetolactate decarboxylase, domain 2"/>
    <property type="match status" value="2"/>
</dbReference>
<dbReference type="InterPro" id="IPR005128">
    <property type="entry name" value="Acetolactate_a_deCO2ase"/>
</dbReference>
<dbReference type="NCBIfam" id="TIGR01252">
    <property type="entry name" value="acetolac_decarb"/>
    <property type="match status" value="1"/>
</dbReference>
<dbReference type="PANTHER" id="PTHR35524">
    <property type="entry name" value="ALPHA-ACETOLACTATE DECARBOXYLASE"/>
    <property type="match status" value="1"/>
</dbReference>
<dbReference type="PANTHER" id="PTHR35524:SF1">
    <property type="entry name" value="ALPHA-ACETOLACTATE DECARBOXYLASE"/>
    <property type="match status" value="1"/>
</dbReference>
<dbReference type="Pfam" id="PF03306">
    <property type="entry name" value="AAL_decarboxy"/>
    <property type="match status" value="1"/>
</dbReference>
<dbReference type="PIRSF" id="PIRSF001332">
    <property type="entry name" value="Acetolac_decarb"/>
    <property type="match status" value="1"/>
</dbReference>
<dbReference type="SUPFAM" id="SSF117856">
    <property type="entry name" value="AF0104/ALDC/Ptd012-like"/>
    <property type="match status" value="1"/>
</dbReference>
<sequence length="239" mass="26843">MSEAIKLFQYNTLGALMAGLYGGTLTVGELLEHGDLGLGTLDSIDGELIVLDGKAYQAKGSEGKVEVVEVSPDEKVPYAAVVPHQAEVIFRQRYEMTDKELEDRIESYYDGVNLFRSIKIKGHFKHMHVRMIPKSNADIKFADVATRQPEYEVDDISGTIVGIWTPEMFHGVSVAGYHLHFISDDLTFGGHVMDFVIENGIIEVGPVDQLDQRFPVQDRQYLFAKFNVDEMRKDITKAE</sequence>
<protein>
    <recommendedName>
        <fullName>Alpha-acetolactate decarboxylase</fullName>
        <ecNumber>4.1.1.5</ecNumber>
    </recommendedName>
</protein>
<proteinExistence type="evidence at protein level"/>
<comment type="function">
    <text evidence="1">Converts acetolactate into acetoin. Regulates leucine and valine biosynthesis by diverting the flux of alpha-acetolactate towards acetoin when the branched-chain amino acids are present in high concentration.</text>
</comment>
<comment type="catalytic activity">
    <reaction evidence="1">
        <text>(2S)-2-acetolactate + H(+) = (R)-acetoin + CO2</text>
        <dbReference type="Rhea" id="RHEA:21580"/>
        <dbReference type="ChEBI" id="CHEBI:15378"/>
        <dbReference type="ChEBI" id="CHEBI:15686"/>
        <dbReference type="ChEBI" id="CHEBI:16526"/>
        <dbReference type="ChEBI" id="CHEBI:58476"/>
        <dbReference type="EC" id="4.1.1.5"/>
    </reaction>
</comment>
<comment type="activity regulation">
    <text evidence="1">The enzyme is active only in the presence of branched-chain amino acids. Valine results in much higher activation than leucine or isoleucine.</text>
</comment>
<comment type="pathway">
    <text>Polyol metabolism; (R,R)-butane-2,3-diol biosynthesis; (R,R)-butane-2,3-diol from pyruvate: step 2/3.</text>
</comment>
<comment type="disruption phenotype">
    <text evidence="1">Slower growth in media containing valine, leucine plus isoleucine, or leucine plus valine.</text>
</comment>
<comment type="similarity">
    <text evidence="2">Belongs to the alpha-acetolactate decarboxylase family.</text>
</comment>
<reference key="1">
    <citation type="journal article" date="2003" name="Lett. Appl. Microbiol.">
        <title>Regulation of branched-chain amino acid biosynthesis by alpha-acetolactate decarboxylase in Streptococcus thermophilus.</title>
        <authorList>
            <person name="Monnet C."/>
            <person name="Nardi M."/>
            <person name="Hols P."/>
            <person name="Gulea M."/>
            <person name="Corrieu G."/>
            <person name="Monnet V."/>
        </authorList>
    </citation>
    <scope>NUCLEOTIDE SEQUENCE [GENOMIC DNA]</scope>
    <scope>FUNCTION</scope>
    <scope>CATALYTIC ACTIVITY</scope>
    <scope>ACTIVITY REGULATION</scope>
    <scope>DISRUPTION PHENOTYPE</scope>
    <source>
        <strain>CNRZ 385</strain>
    </source>
</reference>
<accession>Q8L208</accession>
<name>ALDC_STRTR</name>
<organism>
    <name type="scientific">Streptococcus thermophilus</name>
    <dbReference type="NCBI Taxonomy" id="1308"/>
    <lineage>
        <taxon>Bacteria</taxon>
        <taxon>Bacillati</taxon>
        <taxon>Bacillota</taxon>
        <taxon>Bacilli</taxon>
        <taxon>Lactobacillales</taxon>
        <taxon>Streptococcaceae</taxon>
        <taxon>Streptococcus</taxon>
    </lineage>
</organism>
<feature type="chain" id="PRO_0000403437" description="Alpha-acetolactate decarboxylase">
    <location>
        <begin position="1"/>
        <end position="239"/>
    </location>
</feature>
<gene>
    <name type="primary">aldC</name>
</gene>
<keyword id="KW-0005">Acetoin biosynthesis</keyword>
<keyword id="KW-0210">Decarboxylase</keyword>
<keyword id="KW-0456">Lyase</keyword>